<sequence>MMKKQIINKKDLLGLGPNSKLIKDYKKQWTTLSKIQEETLIGNILGDVYIKKLKRNKHFLLQFEWKNKAYIEHIVRVFDEYVISPPTLYERKNHLGNKVITWRAQTFEHKAFDKLGYYFMENHKKIIKPDLVLNYITERSLAYWFMDDGGKWDYNKKTKNKSLVLHTQGFKKEEVEILINDLNIKFNLNCSIKFNKNKPIIYIPNKDYELFYNLVNPYIIPEMKYKLLFNV</sequence>
<keyword id="KW-0002">3D-structure</keyword>
<keyword id="KW-0255">Endonuclease</keyword>
<keyword id="KW-0378">Hydrolase</keyword>
<keyword id="KW-0404">Intron homing</keyword>
<keyword id="KW-0496">Mitochondrion</keyword>
<keyword id="KW-0540">Nuclease</keyword>
<proteinExistence type="evidence at protein level"/>
<protein>
    <recommendedName>
        <fullName>Probable intron-encoded endonuclease 1</fullName>
        <ecNumber>3.1.-.-</ecNumber>
    </recommendedName>
</protein>
<name>IEND1_WICCA</name>
<accession>Q34807</accession>
<reference key="1">
    <citation type="journal article" date="1995" name="Curr. Genet.">
        <title>The complete mitochondrial DNA sequence of Hansenula wingei reveals new characteristics of yeast mitochondria.</title>
        <authorList>
            <person name="Sekito T."/>
            <person name="Okamoto K."/>
            <person name="Kitano H."/>
            <person name="Yoshida K."/>
        </authorList>
    </citation>
    <scope>NUCLEOTIDE SEQUENCE [LARGE SCALE GENOMIC DNA]</scope>
    <source>
        <strain>21</strain>
    </source>
</reference>
<dbReference type="EC" id="3.1.-.-"/>
<dbReference type="EMBL" id="D31785">
    <property type="protein sequence ID" value="BAA06580.2"/>
    <property type="molecule type" value="Genomic_DNA"/>
</dbReference>
<dbReference type="PIR" id="S58757">
    <property type="entry name" value="S58757"/>
</dbReference>
<dbReference type="RefSeq" id="NP_038225.1">
    <property type="nucleotide sequence ID" value="NC_001762.1"/>
</dbReference>
<dbReference type="PDB" id="6X1J">
    <property type="method" value="X-ray"/>
    <property type="resolution" value="1.95 A"/>
    <property type="chains" value="A=1-231"/>
</dbReference>
<dbReference type="PDBsum" id="6X1J"/>
<dbReference type="SMR" id="Q34807"/>
<dbReference type="GeneID" id="6457767"/>
<dbReference type="GO" id="GO:0005739">
    <property type="term" value="C:mitochondrion"/>
    <property type="evidence" value="ECO:0007669"/>
    <property type="project" value="UniProtKB-SubCell"/>
</dbReference>
<dbReference type="GO" id="GO:0004519">
    <property type="term" value="F:endonuclease activity"/>
    <property type="evidence" value="ECO:0007669"/>
    <property type="project" value="UniProtKB-KW"/>
</dbReference>
<dbReference type="GO" id="GO:0000373">
    <property type="term" value="P:Group II intron splicing"/>
    <property type="evidence" value="ECO:0007669"/>
    <property type="project" value="TreeGrafter"/>
</dbReference>
<dbReference type="GO" id="GO:0006314">
    <property type="term" value="P:intron homing"/>
    <property type="evidence" value="ECO:0007669"/>
    <property type="project" value="UniProtKB-KW"/>
</dbReference>
<dbReference type="GO" id="GO:0045292">
    <property type="term" value="P:mRNA cis splicing, via spliceosome"/>
    <property type="evidence" value="ECO:0007669"/>
    <property type="project" value="TreeGrafter"/>
</dbReference>
<dbReference type="Gene3D" id="3.10.28.10">
    <property type="entry name" value="Homing endonucleases"/>
    <property type="match status" value="2"/>
</dbReference>
<dbReference type="InterPro" id="IPR052500">
    <property type="entry name" value="Chloro/Mito_RNA_Process"/>
</dbReference>
<dbReference type="InterPro" id="IPR027434">
    <property type="entry name" value="Homing_endonucl"/>
</dbReference>
<dbReference type="InterPro" id="IPR004860">
    <property type="entry name" value="LAGLIDADG_dom"/>
</dbReference>
<dbReference type="PANTHER" id="PTHR47539">
    <property type="entry name" value="PENTATRICOPEPTIDE REPEAT-CONTAINING PROTEIN OTP51, CHLOROPLASTIC"/>
    <property type="match status" value="1"/>
</dbReference>
<dbReference type="PANTHER" id="PTHR47539:SF1">
    <property type="entry name" value="PENTATRICOPEPTIDE REPEAT-CONTAINING PROTEIN OTP51, CHLOROPLASTIC"/>
    <property type="match status" value="1"/>
</dbReference>
<dbReference type="Pfam" id="PF03161">
    <property type="entry name" value="LAGLIDADG_2"/>
    <property type="match status" value="1"/>
</dbReference>
<dbReference type="SUPFAM" id="SSF55608">
    <property type="entry name" value="Homing endonucleases"/>
    <property type="match status" value="1"/>
</dbReference>
<comment type="function">
    <text>Endonuclease involved in mitochondrial 21S rRNA gene intron homing.</text>
</comment>
<comment type="subcellular location">
    <subcellularLocation>
        <location>Mitochondrion</location>
    </subcellularLocation>
</comment>
<comment type="similarity">
    <text evidence="1">Belongs to the LAGLIDADG endonuclease family.</text>
</comment>
<geneLocation type="mitochondrion"/>
<organism>
    <name type="scientific">Wickerhamomyces canadensis</name>
    <name type="common">Yeast</name>
    <name type="synonym">Pichia canadensis</name>
    <dbReference type="NCBI Taxonomy" id="1156965"/>
    <lineage>
        <taxon>Eukaryota</taxon>
        <taxon>Fungi</taxon>
        <taxon>Dikarya</taxon>
        <taxon>Ascomycota</taxon>
        <taxon>Saccharomycotina</taxon>
        <taxon>Saccharomycetes</taxon>
        <taxon>Phaffomycetales</taxon>
        <taxon>Wickerhamomycetaceae</taxon>
        <taxon>Wickerhamomyces</taxon>
    </lineage>
</organism>
<evidence type="ECO:0000305" key="1"/>
<evidence type="ECO:0007829" key="2">
    <source>
        <dbReference type="PDB" id="6X1J"/>
    </source>
</evidence>
<feature type="chain" id="PRO_0000192786" description="Probable intron-encoded endonuclease 1">
    <location>
        <begin position="1"/>
        <end position="231"/>
    </location>
</feature>
<feature type="helix" evidence="2">
    <location>
        <begin position="9"/>
        <end position="12"/>
    </location>
</feature>
<feature type="helix" evidence="2">
    <location>
        <begin position="20"/>
        <end position="26"/>
    </location>
</feature>
<feature type="helix" evidence="2">
    <location>
        <begin position="34"/>
        <end position="45"/>
    </location>
</feature>
<feature type="strand" evidence="2">
    <location>
        <begin position="49"/>
        <end position="51"/>
    </location>
</feature>
<feature type="strand" evidence="2">
    <location>
        <begin position="60"/>
        <end position="66"/>
    </location>
</feature>
<feature type="helix" evidence="2">
    <location>
        <begin position="68"/>
        <end position="77"/>
    </location>
</feature>
<feature type="helix" evidence="2">
    <location>
        <begin position="79"/>
        <end position="81"/>
    </location>
</feature>
<feature type="strand" evidence="2">
    <location>
        <begin position="87"/>
        <end position="92"/>
    </location>
</feature>
<feature type="strand" evidence="2">
    <location>
        <begin position="98"/>
        <end position="105"/>
    </location>
</feature>
<feature type="helix" evidence="2">
    <location>
        <begin position="110"/>
        <end position="112"/>
    </location>
</feature>
<feature type="helix" evidence="2">
    <location>
        <begin position="113"/>
        <end position="119"/>
    </location>
</feature>
<feature type="helix" evidence="2">
    <location>
        <begin position="131"/>
        <end position="134"/>
    </location>
</feature>
<feature type="helix" evidence="2">
    <location>
        <begin position="138"/>
        <end position="148"/>
    </location>
</feature>
<feature type="strand" evidence="2">
    <location>
        <begin position="149"/>
        <end position="152"/>
    </location>
</feature>
<feature type="strand" evidence="2">
    <location>
        <begin position="163"/>
        <end position="165"/>
    </location>
</feature>
<feature type="helix" evidence="2">
    <location>
        <begin position="172"/>
        <end position="186"/>
    </location>
</feature>
<feature type="strand" evidence="2">
    <location>
        <begin position="191"/>
        <end position="195"/>
    </location>
</feature>
<feature type="strand" evidence="2">
    <location>
        <begin position="198"/>
        <end position="203"/>
    </location>
</feature>
<feature type="helix" evidence="2">
    <location>
        <begin position="205"/>
        <end position="207"/>
    </location>
</feature>
<feature type="helix" evidence="2">
    <location>
        <begin position="208"/>
        <end position="215"/>
    </location>
</feature>
<feature type="helix" evidence="2">
    <location>
        <begin position="216"/>
        <end position="218"/>
    </location>
</feature>
<feature type="helix" evidence="2">
    <location>
        <begin position="221"/>
        <end position="226"/>
    </location>
</feature>